<accession>Q49KW4</accession>
<name>RK36_EUCGG</name>
<reference key="1">
    <citation type="journal article" date="2005" name="DNA Res.">
        <title>Complete nucleotide sequence of the chloroplast genome from the Tasmanian blue gum, Eucalyptus globulus (Myrtaceae).</title>
        <authorList>
            <person name="Steane D.A."/>
        </authorList>
    </citation>
    <scope>NUCLEOTIDE SEQUENCE [LARGE SCALE GENOMIC DNA]</scope>
</reference>
<evidence type="ECO:0000255" key="1">
    <source>
        <dbReference type="HAMAP-Rule" id="MF_00251"/>
    </source>
</evidence>
<evidence type="ECO:0000305" key="2"/>
<organism>
    <name type="scientific">Eucalyptus globulus subsp. globulus</name>
    <name type="common">Tasmanian blue gum</name>
    <dbReference type="NCBI Taxonomy" id="71271"/>
    <lineage>
        <taxon>Eukaryota</taxon>
        <taxon>Viridiplantae</taxon>
        <taxon>Streptophyta</taxon>
        <taxon>Embryophyta</taxon>
        <taxon>Tracheophyta</taxon>
        <taxon>Spermatophyta</taxon>
        <taxon>Magnoliopsida</taxon>
        <taxon>eudicotyledons</taxon>
        <taxon>Gunneridae</taxon>
        <taxon>Pentapetalae</taxon>
        <taxon>rosids</taxon>
        <taxon>malvids</taxon>
        <taxon>Myrtales</taxon>
        <taxon>Myrtaceae</taxon>
        <taxon>Myrtoideae</taxon>
        <taxon>Eucalypteae</taxon>
        <taxon>Eucalyptus</taxon>
    </lineage>
</organism>
<protein>
    <recommendedName>
        <fullName evidence="1">Large ribosomal subunit protein bL36c</fullName>
    </recommendedName>
    <alternativeName>
        <fullName evidence="2">50S ribosomal protein L36, chloroplastic</fullName>
    </alternativeName>
</protein>
<gene>
    <name evidence="1" type="primary">rpl36</name>
</gene>
<sequence>MKIRASVRKICEKCRLIRRRGRIIVICSNPRHKQRQG</sequence>
<geneLocation type="chloroplast"/>
<feature type="chain" id="PRO_0000276816" description="Large ribosomal subunit protein bL36c">
    <location>
        <begin position="1"/>
        <end position="37"/>
    </location>
</feature>
<proteinExistence type="inferred from homology"/>
<dbReference type="EMBL" id="AY780259">
    <property type="protein sequence ID" value="AAX21061.1"/>
    <property type="molecule type" value="Genomic_DNA"/>
</dbReference>
<dbReference type="RefSeq" id="YP_636333.1">
    <property type="nucleotide sequence ID" value="NC_008115.1"/>
</dbReference>
<dbReference type="SMR" id="Q49KW4"/>
<dbReference type="GeneID" id="4108482"/>
<dbReference type="GO" id="GO:0009507">
    <property type="term" value="C:chloroplast"/>
    <property type="evidence" value="ECO:0007669"/>
    <property type="project" value="UniProtKB-SubCell"/>
</dbReference>
<dbReference type="GO" id="GO:1990904">
    <property type="term" value="C:ribonucleoprotein complex"/>
    <property type="evidence" value="ECO:0007669"/>
    <property type="project" value="UniProtKB-KW"/>
</dbReference>
<dbReference type="GO" id="GO:0005840">
    <property type="term" value="C:ribosome"/>
    <property type="evidence" value="ECO:0007669"/>
    <property type="project" value="UniProtKB-KW"/>
</dbReference>
<dbReference type="GO" id="GO:0003735">
    <property type="term" value="F:structural constituent of ribosome"/>
    <property type="evidence" value="ECO:0007669"/>
    <property type="project" value="InterPro"/>
</dbReference>
<dbReference type="GO" id="GO:0006412">
    <property type="term" value="P:translation"/>
    <property type="evidence" value="ECO:0007669"/>
    <property type="project" value="UniProtKB-UniRule"/>
</dbReference>
<dbReference type="HAMAP" id="MF_00251">
    <property type="entry name" value="Ribosomal_bL36"/>
    <property type="match status" value="1"/>
</dbReference>
<dbReference type="InterPro" id="IPR000473">
    <property type="entry name" value="Ribosomal_bL36"/>
</dbReference>
<dbReference type="InterPro" id="IPR035977">
    <property type="entry name" value="Ribosomal_bL36_sp"/>
</dbReference>
<dbReference type="NCBIfam" id="TIGR01022">
    <property type="entry name" value="rpmJ_bact"/>
    <property type="match status" value="1"/>
</dbReference>
<dbReference type="PANTHER" id="PTHR42888">
    <property type="entry name" value="50S RIBOSOMAL PROTEIN L36, CHLOROPLASTIC"/>
    <property type="match status" value="1"/>
</dbReference>
<dbReference type="PANTHER" id="PTHR42888:SF1">
    <property type="entry name" value="LARGE RIBOSOMAL SUBUNIT PROTEIN BL36C"/>
    <property type="match status" value="1"/>
</dbReference>
<dbReference type="Pfam" id="PF00444">
    <property type="entry name" value="Ribosomal_L36"/>
    <property type="match status" value="1"/>
</dbReference>
<dbReference type="SUPFAM" id="SSF57840">
    <property type="entry name" value="Ribosomal protein L36"/>
    <property type="match status" value="1"/>
</dbReference>
<dbReference type="PROSITE" id="PS00828">
    <property type="entry name" value="RIBOSOMAL_L36"/>
    <property type="match status" value="1"/>
</dbReference>
<keyword id="KW-0150">Chloroplast</keyword>
<keyword id="KW-0934">Plastid</keyword>
<keyword id="KW-0687">Ribonucleoprotein</keyword>
<keyword id="KW-0689">Ribosomal protein</keyword>
<comment type="subcellular location">
    <subcellularLocation>
        <location>Plastid</location>
        <location>Chloroplast</location>
    </subcellularLocation>
</comment>
<comment type="similarity">
    <text evidence="1">Belongs to the bacterial ribosomal protein bL36 family.</text>
</comment>